<keyword id="KW-0002">3D-structure</keyword>
<keyword id="KW-0903">Direct protein sequencing</keyword>
<keyword id="KW-0349">Heme</keyword>
<keyword id="KW-0408">Iron</keyword>
<keyword id="KW-0479">Metal-binding</keyword>
<keyword id="KW-0561">Oxygen transport</keyword>
<keyword id="KW-0813">Transport</keyword>
<reference key="1">
    <citation type="journal article" date="1989" name="Biochemistry">
        <title>cDNA cloning and predicted amino acid sequence of Glycera dibranchiata monomer hemoglobin IV.</title>
        <authorList>
            <person name="Simons P.C."/>
            <person name="Satterlee J.D."/>
        </authorList>
    </citation>
    <scope>NUCLEOTIDE SEQUENCE [MRNA]</scope>
    <scope>PROTEIN SEQUENCE OF 2-25</scope>
</reference>
<reference key="2">
    <citation type="journal article" date="1994" name="J. Protein Chem.">
        <title>Complete amino acid sequence of the Glycera dibranchiata monomer hemoglobin component IV: structural implications.</title>
        <authorList>
            <person name="Alam S.L."/>
            <person name="Satterlee J.D."/>
            <person name="Edmonds C.G."/>
        </authorList>
    </citation>
    <scope>PROTEIN SEQUENCE OF 2-148</scope>
    <scope>MASS SPECTROMETRY</scope>
    <scope>3D-STRUCTURE MODELING</scope>
    <source>
        <tissue>Erythrocyte</tissue>
    </source>
</reference>
<reference key="3">
    <citation type="journal article" date="1998" name="Biochemistry">
        <title>Solution structure and backbone dynamics of component IV Glycera dibranchiata monomeric hemoglobin-CO.</title>
        <authorList>
            <person name="Volkman B.F."/>
            <person name="Alam S.L."/>
            <person name="Satterlee J.D."/>
            <person name="Markley J.L."/>
        </authorList>
    </citation>
    <scope>STRUCTURE BY NMR</scope>
</reference>
<reference key="4">
    <citation type="journal article" date="2002" name="Proteins">
        <title>Crystal structures of unligated and CN-ligated Glycera dibranchiata monomer ferric hemoglobin components III and IV.</title>
        <authorList>
            <person name="Park H.J."/>
            <person name="Yang C."/>
            <person name="Treff N."/>
            <person name="Satterlee J.D."/>
            <person name="Kang C."/>
        </authorList>
    </citation>
    <scope>X-RAY CRYSTALLOGRAPHY (1.4 ANGSTROMS)IN COMPLEX WITH HEME</scope>
    <scope>SUBUNIT</scope>
</reference>
<dbReference type="EMBL" id="J02873">
    <property type="protein sequence ID" value="AAA29162.1"/>
    <property type="molecule type" value="mRNA"/>
</dbReference>
<dbReference type="PIR" id="A33420">
    <property type="entry name" value="A33420"/>
</dbReference>
<dbReference type="PDB" id="1JF4">
    <property type="method" value="X-ray"/>
    <property type="resolution" value="1.40 A"/>
    <property type="chains" value="A=2-148"/>
</dbReference>
<dbReference type="PDB" id="1JL6">
    <property type="method" value="X-ray"/>
    <property type="resolution" value="1.40 A"/>
    <property type="chains" value="A=2-148"/>
</dbReference>
<dbReference type="PDB" id="1VRE">
    <property type="method" value="NMR"/>
    <property type="chains" value="A=2-148"/>
</dbReference>
<dbReference type="PDB" id="1VRF">
    <property type="method" value="NMR"/>
    <property type="chains" value="A=2-148"/>
</dbReference>
<dbReference type="PDBsum" id="1JF4"/>
<dbReference type="PDBsum" id="1JL6"/>
<dbReference type="PDBsum" id="1VRE"/>
<dbReference type="PDBsum" id="1VRF"/>
<dbReference type="BMRB" id="P15447"/>
<dbReference type="SMR" id="P15447"/>
<dbReference type="EvolutionaryTrace" id="P15447"/>
<dbReference type="GO" id="GO:0020037">
    <property type="term" value="F:heme binding"/>
    <property type="evidence" value="ECO:0007669"/>
    <property type="project" value="InterPro"/>
</dbReference>
<dbReference type="GO" id="GO:0046872">
    <property type="term" value="F:metal ion binding"/>
    <property type="evidence" value="ECO:0007669"/>
    <property type="project" value="UniProtKB-KW"/>
</dbReference>
<dbReference type="GO" id="GO:0019825">
    <property type="term" value="F:oxygen binding"/>
    <property type="evidence" value="ECO:0007669"/>
    <property type="project" value="InterPro"/>
</dbReference>
<dbReference type="GO" id="GO:0005344">
    <property type="term" value="F:oxygen carrier activity"/>
    <property type="evidence" value="ECO:0007669"/>
    <property type="project" value="UniProtKB-KW"/>
</dbReference>
<dbReference type="CDD" id="cd01040">
    <property type="entry name" value="Mb-like"/>
    <property type="match status" value="1"/>
</dbReference>
<dbReference type="Gene3D" id="1.10.490.10">
    <property type="entry name" value="Globins"/>
    <property type="match status" value="1"/>
</dbReference>
<dbReference type="InterPro" id="IPR000971">
    <property type="entry name" value="Globin"/>
</dbReference>
<dbReference type="InterPro" id="IPR050532">
    <property type="entry name" value="Globin-like_OT"/>
</dbReference>
<dbReference type="InterPro" id="IPR009050">
    <property type="entry name" value="Globin-like_sf"/>
</dbReference>
<dbReference type="InterPro" id="IPR012292">
    <property type="entry name" value="Globin/Proto"/>
</dbReference>
<dbReference type="InterPro" id="IPR044399">
    <property type="entry name" value="Mb-like_M"/>
</dbReference>
<dbReference type="PANTHER" id="PTHR46458">
    <property type="entry name" value="BLR2807 PROTEIN"/>
    <property type="match status" value="1"/>
</dbReference>
<dbReference type="PANTHER" id="PTHR46458:SF1">
    <property type="entry name" value="GEO09476P1"/>
    <property type="match status" value="1"/>
</dbReference>
<dbReference type="Pfam" id="PF00042">
    <property type="entry name" value="Globin"/>
    <property type="match status" value="1"/>
</dbReference>
<dbReference type="PRINTS" id="PR01907">
    <property type="entry name" value="WORMGLOBIN"/>
</dbReference>
<dbReference type="SUPFAM" id="SSF46458">
    <property type="entry name" value="Globin-like"/>
    <property type="match status" value="1"/>
</dbReference>
<dbReference type="PROSITE" id="PS01033">
    <property type="entry name" value="GLOBIN"/>
    <property type="match status" value="1"/>
</dbReference>
<accession>P15447</accession>
<accession>P81779</accession>
<proteinExistence type="evidence at protein level"/>
<feature type="initiator methionine" description="Removed" evidence="3 4">
    <location>
        <position position="1"/>
    </location>
</feature>
<feature type="chain" id="PRO_0000052502" description="Globin, monomeric component M-IV">
    <location>
        <begin position="2"/>
        <end position="148"/>
    </location>
</feature>
<feature type="domain" description="Globin" evidence="1">
    <location>
        <begin position="2"/>
        <end position="147"/>
    </location>
</feature>
<feature type="binding site" description="axial binding residue">
    <location>
        <position position="91"/>
    </location>
    <ligand>
        <name>heme b</name>
        <dbReference type="ChEBI" id="CHEBI:60344"/>
    </ligand>
    <ligandPart>
        <name>Fe</name>
        <dbReference type="ChEBI" id="CHEBI:18248"/>
    </ligandPart>
</feature>
<feature type="helix" evidence="5">
    <location>
        <begin position="5"/>
        <end position="19"/>
    </location>
</feature>
<feature type="turn" evidence="5">
    <location>
        <begin position="20"/>
        <end position="24"/>
    </location>
</feature>
<feature type="helix" evidence="5">
    <location>
        <begin position="25"/>
        <end position="38"/>
    </location>
</feature>
<feature type="helix" evidence="5">
    <location>
        <begin position="40"/>
        <end position="42"/>
    </location>
</feature>
<feature type="helix" evidence="5">
    <location>
        <begin position="43"/>
        <end position="46"/>
    </location>
</feature>
<feature type="strand" evidence="6">
    <location>
        <begin position="49"/>
        <end position="52"/>
    </location>
</feature>
<feature type="helix" evidence="5">
    <location>
        <begin position="55"/>
        <end position="72"/>
    </location>
</feature>
<feature type="turn" evidence="5">
    <location>
        <begin position="73"/>
        <end position="75"/>
    </location>
</feature>
<feature type="helix" evidence="5">
    <location>
        <begin position="77"/>
        <end position="90"/>
    </location>
</feature>
<feature type="helix" evidence="5">
    <location>
        <begin position="91"/>
        <end position="93"/>
    </location>
</feature>
<feature type="strand" evidence="5">
    <location>
        <begin position="94"/>
        <end position="97"/>
    </location>
</feature>
<feature type="helix" evidence="5">
    <location>
        <begin position="101"/>
        <end position="103"/>
    </location>
</feature>
<feature type="helix" evidence="5">
    <location>
        <begin position="104"/>
        <end position="119"/>
    </location>
</feature>
<feature type="helix" evidence="5">
    <location>
        <begin position="120"/>
        <end position="122"/>
    </location>
</feature>
<feature type="helix" evidence="5">
    <location>
        <begin position="125"/>
        <end position="146"/>
    </location>
</feature>
<name>GLB4_GLYDI</name>
<organism>
    <name type="scientific">Glycera dibranchiata</name>
    <name type="common">Bloodworm</name>
    <dbReference type="NCBI Taxonomy" id="6350"/>
    <lineage>
        <taxon>Eukaryota</taxon>
        <taxon>Metazoa</taxon>
        <taxon>Spiralia</taxon>
        <taxon>Lophotrochozoa</taxon>
        <taxon>Annelida</taxon>
        <taxon>Polychaeta</taxon>
        <taxon>Errantia</taxon>
        <taxon>Phyllodocida</taxon>
        <taxon>Glyceridae</taxon>
        <taxon>Glycera</taxon>
    </lineage>
</organism>
<sequence>MGLSAAQRQVVASTWKDIAGSDNGAGVGKECFTKFLSAHHDIAAVFGFSGASDPGVADLGAKVLAQIGVAVSHLGDEGKMVAEMKAVGVRHKGYGYKHIKAEYFEPLGASLLSAMEHRIGGKMTAAAKDAWAAAYADISGALISGLQS</sequence>
<evidence type="ECO:0000255" key="1">
    <source>
        <dbReference type="PROSITE-ProRule" id="PRU00238"/>
    </source>
</evidence>
<evidence type="ECO:0000269" key="2">
    <source>
    </source>
</evidence>
<evidence type="ECO:0000269" key="3">
    <source>
    </source>
</evidence>
<evidence type="ECO:0000269" key="4">
    <source>
    </source>
</evidence>
<evidence type="ECO:0007829" key="5">
    <source>
        <dbReference type="PDB" id="1JF4"/>
    </source>
</evidence>
<evidence type="ECO:0007829" key="6">
    <source>
        <dbReference type="PDB" id="1VRE"/>
    </source>
</evidence>
<protein>
    <recommendedName>
        <fullName>Globin, monomeric component M-IV</fullName>
    </recommendedName>
    <alternativeName>
        <fullName>GMH4</fullName>
    </alternativeName>
</protein>
<comment type="subunit">
    <text evidence="2">Monomer.</text>
</comment>
<comment type="mass spectrometry"/>
<comment type="similarity">
    <text evidence="1">Belongs to the globin family.</text>
</comment>